<gene>
    <name evidence="3" type="primary">UGT9</name>
</gene>
<protein>
    <recommendedName>
        <fullName evidence="3">UDP glycosyltransferase 9</fullName>
        <shortName evidence="3">CrUGT9</shortName>
        <ecNumber evidence="2">2.4.1.-</ecNumber>
    </recommendedName>
</protein>
<evidence type="ECO:0000250" key="1">
    <source>
        <dbReference type="UniProtKB" id="Q9M156"/>
    </source>
</evidence>
<evidence type="ECO:0000255" key="2">
    <source>
        <dbReference type="RuleBase" id="RU362057"/>
    </source>
</evidence>
<evidence type="ECO:0000303" key="3">
    <source>
    </source>
</evidence>
<evidence type="ECO:0000305" key="4"/>
<accession>W8JMV4</accession>
<sequence length="474" mass="53544">MGTIDIITSPTPIHILAFPFPAKGHINPLLHLCNRLASKGFKITLITTVSTLKSVKTSKANGIDIESIPDGIPQEQNHQIITVMEMNMELYFKQFKASAIENTTKLIQKLKTKNPPPKVLIYDSSMPWILEVAHEQGLLGASFFTQPCSVSAIYYHMLQGTIKLPLENSENGMVSLPYLPLLEKKDLPGVQQFEDNSEALAELLADQFSNIDDVDYVLFNTFDALEIEVVNWMGSKWPILTVGPTAPTSMFLLDKKQKNYEDGRSINYLFETNTEVCMKWLDQREIDTVIYVSFGSLASLTEEQMEQVSQALIRSNCYFLWVVREEEENKLPKDFKETTSKKKGLVINWCPQLDVLAHKSVACFMTHCGWNSTLEALCSGVPMICMPQWADQTTNAKLIEHVWKIGVGVNKSDENGIVKREDIEDCIRQVIESERGKELKRNAIKWKELAKEAVSEGGSSYNNIQEFSSSLLFN</sequence>
<dbReference type="EC" id="2.4.1.-" evidence="2"/>
<dbReference type="EMBL" id="KF302080">
    <property type="protein sequence ID" value="AHK60847.1"/>
    <property type="molecule type" value="mRNA"/>
</dbReference>
<dbReference type="PDB" id="8IN7">
    <property type="method" value="X-ray"/>
    <property type="resolution" value="1.90 A"/>
    <property type="chains" value="A=1-474"/>
</dbReference>
<dbReference type="PDB" id="8INA">
    <property type="method" value="X-ray"/>
    <property type="resolution" value="1.86 A"/>
    <property type="chains" value="A=1-474"/>
</dbReference>
<dbReference type="PDB" id="8IND">
    <property type="method" value="X-ray"/>
    <property type="resolution" value="1.85 A"/>
    <property type="chains" value="A=11-474"/>
</dbReference>
<dbReference type="PDB" id="8INJ">
    <property type="method" value="X-ray"/>
    <property type="resolution" value="1.76 A"/>
    <property type="chains" value="A=11-474"/>
</dbReference>
<dbReference type="PDB" id="8INO">
    <property type="method" value="X-ray"/>
    <property type="resolution" value="2.30 A"/>
    <property type="chains" value="A=11-474"/>
</dbReference>
<dbReference type="PDB" id="8INV">
    <property type="method" value="X-ray"/>
    <property type="resolution" value="1.85 A"/>
    <property type="chains" value="A=11-474"/>
</dbReference>
<dbReference type="PDB" id="8WRJ">
    <property type="method" value="X-ray"/>
    <property type="resolution" value="1.85 A"/>
    <property type="chains" value="A=1-474"/>
</dbReference>
<dbReference type="PDB" id="8WRK">
    <property type="method" value="X-ray"/>
    <property type="resolution" value="2.03 A"/>
    <property type="chains" value="A=11-474"/>
</dbReference>
<dbReference type="PDBsum" id="8IN7"/>
<dbReference type="PDBsum" id="8INA"/>
<dbReference type="PDBsum" id="8IND"/>
<dbReference type="PDBsum" id="8INJ"/>
<dbReference type="PDBsum" id="8INO"/>
<dbReference type="PDBsum" id="8INV"/>
<dbReference type="PDBsum" id="8WRJ"/>
<dbReference type="PDBsum" id="8WRK"/>
<dbReference type="SMR" id="W8JMV4"/>
<dbReference type="OrthoDB" id="5835829at2759"/>
<dbReference type="GO" id="GO:0080043">
    <property type="term" value="F:quercetin 3-O-glucosyltransferase activity"/>
    <property type="evidence" value="ECO:0007669"/>
    <property type="project" value="TreeGrafter"/>
</dbReference>
<dbReference type="GO" id="GO:0080044">
    <property type="term" value="F:quercetin 7-O-glucosyltransferase activity"/>
    <property type="evidence" value="ECO:0007669"/>
    <property type="project" value="TreeGrafter"/>
</dbReference>
<dbReference type="CDD" id="cd03784">
    <property type="entry name" value="GT1_Gtf-like"/>
    <property type="match status" value="1"/>
</dbReference>
<dbReference type="FunFam" id="3.40.50.2000:FF:000019">
    <property type="entry name" value="Glycosyltransferase"/>
    <property type="match status" value="1"/>
</dbReference>
<dbReference type="Gene3D" id="3.40.50.2000">
    <property type="entry name" value="Glycogen Phosphorylase B"/>
    <property type="match status" value="2"/>
</dbReference>
<dbReference type="InterPro" id="IPR002213">
    <property type="entry name" value="UDP_glucos_trans"/>
</dbReference>
<dbReference type="InterPro" id="IPR035595">
    <property type="entry name" value="UDP_glycos_trans_CS"/>
</dbReference>
<dbReference type="PANTHER" id="PTHR11926">
    <property type="entry name" value="GLUCOSYL/GLUCURONOSYL TRANSFERASES"/>
    <property type="match status" value="1"/>
</dbReference>
<dbReference type="PANTHER" id="PTHR11926:SF1560">
    <property type="entry name" value="UDP-GLYCOSYLTRANSFERASE 74E1-RELATED"/>
    <property type="match status" value="1"/>
</dbReference>
<dbReference type="Pfam" id="PF00201">
    <property type="entry name" value="UDPGT"/>
    <property type="match status" value="1"/>
</dbReference>
<dbReference type="SUPFAM" id="SSF53756">
    <property type="entry name" value="UDP-Glycosyltransferase/glycogen phosphorylase"/>
    <property type="match status" value="1"/>
</dbReference>
<dbReference type="PROSITE" id="PS00375">
    <property type="entry name" value="UDPGT"/>
    <property type="match status" value="1"/>
</dbReference>
<organism>
    <name type="scientific">Catharanthus roseus</name>
    <name type="common">Madagascar periwinkle</name>
    <name type="synonym">Vinca rosea</name>
    <dbReference type="NCBI Taxonomy" id="4058"/>
    <lineage>
        <taxon>Eukaryota</taxon>
        <taxon>Viridiplantae</taxon>
        <taxon>Streptophyta</taxon>
        <taxon>Embryophyta</taxon>
        <taxon>Tracheophyta</taxon>
        <taxon>Spermatophyta</taxon>
        <taxon>Magnoliopsida</taxon>
        <taxon>eudicotyledons</taxon>
        <taxon>Gunneridae</taxon>
        <taxon>Pentapetalae</taxon>
        <taxon>asterids</taxon>
        <taxon>lamiids</taxon>
        <taxon>Gentianales</taxon>
        <taxon>Apocynaceae</taxon>
        <taxon>Rauvolfioideae</taxon>
        <taxon>Vinceae</taxon>
        <taxon>Catharanthinae</taxon>
        <taxon>Catharanthus</taxon>
    </lineage>
</organism>
<keyword id="KW-0002">3D-structure</keyword>
<keyword id="KW-0328">Glycosyltransferase</keyword>
<keyword id="KW-0808">Transferase</keyword>
<comment type="similarity">
    <text evidence="4">Belongs to the UDP-glycosyltransferase family.</text>
</comment>
<name>UGT9_CATRO</name>
<proteinExistence type="evidence at protein level"/>
<feature type="chain" id="PRO_0000446419" description="UDP glycosyltransferase 9">
    <location>
        <begin position="1"/>
        <end position="474"/>
    </location>
</feature>
<feature type="binding site" evidence="1">
    <location>
        <position position="296"/>
    </location>
    <ligand>
        <name>UDP-alpha-D-glucose</name>
        <dbReference type="ChEBI" id="CHEBI:58885"/>
    </ligand>
</feature>
<feature type="binding site" evidence="1">
    <location>
        <begin position="349"/>
        <end position="350"/>
    </location>
    <ligand>
        <name>UDP-alpha-D-glucose</name>
        <dbReference type="ChEBI" id="CHEBI:58885"/>
    </ligand>
</feature>
<feature type="binding site" evidence="1">
    <location>
        <begin position="367"/>
        <end position="375"/>
    </location>
    <ligand>
        <name>UDP-alpha-D-glucose</name>
        <dbReference type="ChEBI" id="CHEBI:58885"/>
    </ligand>
</feature>
<feature type="binding site" evidence="1">
    <location>
        <begin position="389"/>
        <end position="392"/>
    </location>
    <ligand>
        <name>UDP-alpha-D-glucose</name>
        <dbReference type="ChEBI" id="CHEBI:58885"/>
    </ligand>
</feature>
<reference key="1">
    <citation type="journal article" date="2014" name="Nat. Commun.">
        <title>The seco-iridoid pathway from Catharanthus roseus.</title>
        <authorList>
            <person name="Miettinen K."/>
            <person name="Dong L."/>
            <person name="Navrot N."/>
            <person name="Schneider T."/>
            <person name="Burlat V."/>
            <person name="Pollier J."/>
            <person name="Woittiez L."/>
            <person name="van der Krol S."/>
            <person name="Lugan R."/>
            <person name="Ilc T."/>
            <person name="Verpoorte R."/>
            <person name="Oksman-Caldentey K.M."/>
            <person name="Martinoia E."/>
            <person name="Bouwmeester H."/>
            <person name="Goossens A."/>
            <person name="Memelink J."/>
            <person name="Werck-Reichhart D."/>
        </authorList>
    </citation>
    <scope>NUCLEOTIDE SEQUENCE [MRNA]</scope>
    <source>
        <strain>cv. Little Bright Eyes</strain>
    </source>
</reference>